<reference key="1">
    <citation type="journal article" date="2006" name="Proc. Natl. Acad. Sci. U.S.A.">
        <title>Molecular genetic anatomy of inter- and intraserotype variation in the human bacterial pathogen group A Streptococcus.</title>
        <authorList>
            <person name="Beres S.B."/>
            <person name="Richter E.W."/>
            <person name="Nagiec M.J."/>
            <person name="Sumby P."/>
            <person name="Porcella S.F."/>
            <person name="DeLeo F.R."/>
            <person name="Musser J.M."/>
        </authorList>
    </citation>
    <scope>NUCLEOTIDE SEQUENCE [LARGE SCALE GENOMIC DNA]</scope>
    <source>
        <strain>MGAS10270</strain>
    </source>
</reference>
<evidence type="ECO:0000255" key="1">
    <source>
        <dbReference type="HAMAP-Rule" id="MF_01568"/>
    </source>
</evidence>
<name>NTDP_STRPD</name>
<accession>Q1JFQ7</accession>
<sequence>MKLPKEGDFITIQSYKHDGSLHRTWRDTMVLKTTENALIGVNDHTLVTESDGRRWVTREPAIVYFHKKYWFNIIAMIRDNGVSYYCNLASPYMMDTEALKYIDYDLDVKVFADGEKRLLDVDEYEIHKKEMQYSADMDFILKENVKILVDWINHEKGPFSKAYITIWYKRYLELKNR</sequence>
<gene>
    <name type="ordered locus">MGAS10270_Spy1437</name>
</gene>
<proteinExistence type="inferred from homology"/>
<protein>
    <recommendedName>
        <fullName evidence="1">Nucleoside triphosphate/diphosphate phosphatase</fullName>
        <ecNumber evidence="1">3.6.1.15</ecNumber>
        <ecNumber evidence="1">3.6.1.6</ecNumber>
    </recommendedName>
</protein>
<comment type="function">
    <text evidence="1">Has nucleoside phosphatase activity towards nucleoside triphosphates and nucleoside diphosphates.</text>
</comment>
<comment type="catalytic activity">
    <reaction evidence="1">
        <text>a ribonucleoside 5'-triphosphate + H2O = a ribonucleoside 5'-diphosphate + phosphate + H(+)</text>
        <dbReference type="Rhea" id="RHEA:23680"/>
        <dbReference type="ChEBI" id="CHEBI:15377"/>
        <dbReference type="ChEBI" id="CHEBI:15378"/>
        <dbReference type="ChEBI" id="CHEBI:43474"/>
        <dbReference type="ChEBI" id="CHEBI:57930"/>
        <dbReference type="ChEBI" id="CHEBI:61557"/>
        <dbReference type="EC" id="3.6.1.15"/>
    </reaction>
</comment>
<comment type="catalytic activity">
    <reaction evidence="1">
        <text>a ribonucleoside 5'-diphosphate + H2O = a ribonucleoside 5'-phosphate + phosphate + H(+)</text>
        <dbReference type="Rhea" id="RHEA:36799"/>
        <dbReference type="ChEBI" id="CHEBI:15377"/>
        <dbReference type="ChEBI" id="CHEBI:15378"/>
        <dbReference type="ChEBI" id="CHEBI:43474"/>
        <dbReference type="ChEBI" id="CHEBI:57930"/>
        <dbReference type="ChEBI" id="CHEBI:58043"/>
        <dbReference type="EC" id="3.6.1.6"/>
    </reaction>
</comment>
<comment type="cofactor">
    <cofactor evidence="1">
        <name>Mg(2+)</name>
        <dbReference type="ChEBI" id="CHEBI:18420"/>
    </cofactor>
</comment>
<comment type="similarity">
    <text evidence="1">Belongs to the Ntdp family.</text>
</comment>
<dbReference type="EC" id="3.6.1.15" evidence="1"/>
<dbReference type="EC" id="3.6.1.6" evidence="1"/>
<dbReference type="EMBL" id="CP000260">
    <property type="protein sequence ID" value="ABF34502.1"/>
    <property type="molecule type" value="Genomic_DNA"/>
</dbReference>
<dbReference type="RefSeq" id="WP_002983693.1">
    <property type="nucleotide sequence ID" value="NZ_CVUH01000010.1"/>
</dbReference>
<dbReference type="SMR" id="Q1JFQ7"/>
<dbReference type="KEGG" id="sph:MGAS10270_Spy1437"/>
<dbReference type="HOGENOM" id="CLU_109787_1_0_9"/>
<dbReference type="Proteomes" id="UP000002436">
    <property type="component" value="Chromosome"/>
</dbReference>
<dbReference type="GO" id="GO:0000287">
    <property type="term" value="F:magnesium ion binding"/>
    <property type="evidence" value="ECO:0007669"/>
    <property type="project" value="UniProtKB-UniRule"/>
</dbReference>
<dbReference type="GO" id="GO:0017110">
    <property type="term" value="F:nucleoside diphosphate phosphatase activity"/>
    <property type="evidence" value="ECO:0007669"/>
    <property type="project" value="UniProtKB-UniRule"/>
</dbReference>
<dbReference type="GO" id="GO:0017111">
    <property type="term" value="F:ribonucleoside triphosphate phosphatase activity"/>
    <property type="evidence" value="ECO:0007669"/>
    <property type="project" value="UniProtKB-UniRule"/>
</dbReference>
<dbReference type="Gene3D" id="2.40.380.10">
    <property type="entry name" value="FomD-like"/>
    <property type="match status" value="1"/>
</dbReference>
<dbReference type="HAMAP" id="MF_01568">
    <property type="entry name" value="Ntdp"/>
    <property type="match status" value="1"/>
</dbReference>
<dbReference type="InterPro" id="IPR007295">
    <property type="entry name" value="DUF402"/>
</dbReference>
<dbReference type="InterPro" id="IPR035930">
    <property type="entry name" value="FomD-like_sf"/>
</dbReference>
<dbReference type="InterPro" id="IPR050212">
    <property type="entry name" value="Ntdp-like"/>
</dbReference>
<dbReference type="InterPro" id="IPR016882">
    <property type="entry name" value="SA1684"/>
</dbReference>
<dbReference type="NCBIfam" id="NF010183">
    <property type="entry name" value="PRK13662.1"/>
    <property type="match status" value="1"/>
</dbReference>
<dbReference type="PANTHER" id="PTHR39159">
    <property type="match status" value="1"/>
</dbReference>
<dbReference type="PANTHER" id="PTHR39159:SF1">
    <property type="entry name" value="UPF0374 PROTEIN YGAC"/>
    <property type="match status" value="1"/>
</dbReference>
<dbReference type="Pfam" id="PF04167">
    <property type="entry name" value="DUF402"/>
    <property type="match status" value="1"/>
</dbReference>
<dbReference type="PIRSF" id="PIRSF028345">
    <property type="entry name" value="UCP028345"/>
    <property type="match status" value="1"/>
</dbReference>
<dbReference type="SUPFAM" id="SSF159234">
    <property type="entry name" value="FomD-like"/>
    <property type="match status" value="1"/>
</dbReference>
<organism>
    <name type="scientific">Streptococcus pyogenes serotype M2 (strain MGAS10270)</name>
    <dbReference type="NCBI Taxonomy" id="370552"/>
    <lineage>
        <taxon>Bacteria</taxon>
        <taxon>Bacillati</taxon>
        <taxon>Bacillota</taxon>
        <taxon>Bacilli</taxon>
        <taxon>Lactobacillales</taxon>
        <taxon>Streptococcaceae</taxon>
        <taxon>Streptococcus</taxon>
    </lineage>
</organism>
<keyword id="KW-0378">Hydrolase</keyword>
<keyword id="KW-0460">Magnesium</keyword>
<keyword id="KW-0479">Metal-binding</keyword>
<feature type="chain" id="PRO_0000248127" description="Nucleoside triphosphate/diphosphate phosphatase">
    <location>
        <begin position="1"/>
        <end position="177"/>
    </location>
</feature>
<feature type="active site" description="Proton donor" evidence="1">
    <location>
        <position position="23"/>
    </location>
</feature>
<feature type="binding site" evidence="1">
    <location>
        <position position="87"/>
    </location>
    <ligand>
        <name>Mg(2+)</name>
        <dbReference type="ChEBI" id="CHEBI:18420"/>
        <label>1</label>
    </ligand>
</feature>
<feature type="binding site" evidence="1">
    <location>
        <position position="103"/>
    </location>
    <ligand>
        <name>Mg(2+)</name>
        <dbReference type="ChEBI" id="CHEBI:18420"/>
        <label>1</label>
    </ligand>
</feature>
<feature type="binding site" evidence="1">
    <location>
        <position position="105"/>
    </location>
    <ligand>
        <name>Mg(2+)</name>
        <dbReference type="ChEBI" id="CHEBI:18420"/>
        <label>2</label>
    </ligand>
</feature>
<feature type="binding site" evidence="1">
    <location>
        <position position="107"/>
    </location>
    <ligand>
        <name>Mg(2+)</name>
        <dbReference type="ChEBI" id="CHEBI:18420"/>
        <label>1</label>
    </ligand>
</feature>
<feature type="binding site" evidence="1">
    <location>
        <position position="107"/>
    </location>
    <ligand>
        <name>Mg(2+)</name>
        <dbReference type="ChEBI" id="CHEBI:18420"/>
        <label>2</label>
    </ligand>
</feature>
<feature type="binding site" evidence="1">
    <location>
        <position position="120"/>
    </location>
    <ligand>
        <name>Mg(2+)</name>
        <dbReference type="ChEBI" id="CHEBI:18420"/>
        <label>2</label>
    </ligand>
</feature>
<feature type="binding site" evidence="1">
    <location>
        <position position="123"/>
    </location>
    <ligand>
        <name>Mg(2+)</name>
        <dbReference type="ChEBI" id="CHEBI:18420"/>
        <label>2</label>
    </ligand>
</feature>